<accession>A5U908</accession>
<keyword id="KW-0963">Cytoplasm</keyword>
<keyword id="KW-0456">Lyase</keyword>
<keyword id="KW-0663">Pyridoxal phosphate</keyword>
<keyword id="KW-1185">Reference proteome</keyword>
<reference evidence="7" key="1">
    <citation type="journal article" date="2008" name="PLoS ONE">
        <title>Genetic basis of virulence attenuation revealed by comparative genomic analysis of Mycobacterium tuberculosis strain H37Ra versus H37Rv.</title>
        <authorList>
            <person name="Zheng H."/>
            <person name="Lu L."/>
            <person name="Wang B."/>
            <person name="Pu S."/>
            <person name="Zhang X."/>
            <person name="Zhu G."/>
            <person name="Shi W."/>
            <person name="Zhang L."/>
            <person name="Wang H."/>
            <person name="Wang S."/>
            <person name="Zhao G."/>
            <person name="Zhang Y."/>
        </authorList>
    </citation>
    <scope>NUCLEOTIDE SEQUENCE [LARGE SCALE GENOMIC DNA]</scope>
    <source>
        <strain>ATCC 25177 / H37Ra</strain>
    </source>
</reference>
<reference key="2">
    <citation type="journal article" date="2020" name="J. Proteomics">
        <title>Proteomic characterization of Mycobacterium tuberculosis reveals potential targets of bostrycin.</title>
        <authorList>
            <person name="Yuan P."/>
            <person name="He L."/>
            <person name="Chen D."/>
            <person name="Sun Y."/>
            <person name="Ge Z."/>
            <person name="Shen D."/>
            <person name="Lu Y."/>
        </authorList>
    </citation>
    <scope>INDUCTION</scope>
    <scope>POSSIBLE ANTIBIOTIC BINDING</scope>
    <source>
        <strain>ATCC 25177 / H37Ra</strain>
    </source>
</reference>
<organism>
    <name type="scientific">Mycobacterium tuberculosis (strain ATCC 25177 / H37Ra)</name>
    <dbReference type="NCBI Taxonomy" id="419947"/>
    <lineage>
        <taxon>Bacteria</taxon>
        <taxon>Bacillati</taxon>
        <taxon>Actinomycetota</taxon>
        <taxon>Actinomycetes</taxon>
        <taxon>Mycobacteriales</taxon>
        <taxon>Mycobacteriaceae</taxon>
        <taxon>Mycobacterium</taxon>
        <taxon>Mycobacterium tuberculosis complex</taxon>
    </lineage>
</organism>
<comment type="function">
    <text evidence="2">A cysteine desulfhydrase that generates hydrogen sulfide, H(2)S. The H(2)S produced by this enzyme stimulates respiration in M.tuberculosis, mediated primarily via cytochrome bd with a lesser contribution from cytochrome bc1/aa3. H(2)S modulates the balance between respiration and glycolysis, and also contributes to redox homeostasis. Probably eliminates toxic levels of Cys (which can induce oxidative stress).</text>
</comment>
<comment type="catalytic activity">
    <reaction evidence="3">
        <text>L-cysteine + H2O = hydrogen sulfide + pyruvate + NH4(+) + H(+)</text>
        <dbReference type="Rhea" id="RHEA:24931"/>
        <dbReference type="ChEBI" id="CHEBI:15361"/>
        <dbReference type="ChEBI" id="CHEBI:15377"/>
        <dbReference type="ChEBI" id="CHEBI:15378"/>
        <dbReference type="ChEBI" id="CHEBI:28938"/>
        <dbReference type="ChEBI" id="CHEBI:29919"/>
        <dbReference type="ChEBI" id="CHEBI:35235"/>
        <dbReference type="EC" id="4.4.1.1"/>
    </reaction>
    <physiologicalReaction direction="left-to-right" evidence="3">
        <dbReference type="Rhea" id="RHEA:24932"/>
    </physiologicalReaction>
</comment>
<comment type="cofactor">
    <cofactor evidence="3">
        <name>pyridoxal 5'-phosphate</name>
        <dbReference type="ChEBI" id="CHEBI:597326"/>
    </cofactor>
</comment>
<comment type="subcellular location">
    <subcellularLocation>
        <location evidence="5">Cytoplasm</location>
    </subcellularLocation>
</comment>
<comment type="induction">
    <text evidence="4">Decreased expression following exposure to the antibiotic bostrycin (at protein level).</text>
</comment>
<comment type="miscellaneous">
    <text evidence="6">Has been modeled to bind the antibiotic bostrycin.</text>
</comment>
<comment type="similarity">
    <text evidence="3">Belongs to the cysteine synthase/cystathionine beta-synthase family. Cds1 subfamily.</text>
</comment>
<comment type="sequence caution" evidence="2 5">
    <conflict type="erroneous initiation">
        <sequence resource="EMBL-CDS" id="ABQ75508"/>
    </conflict>
    <text>Truncated N-terminus.</text>
</comment>
<dbReference type="EC" id="4.4.1.1" evidence="2 3"/>
<dbReference type="EMBL" id="CP000611">
    <property type="protein sequence ID" value="ABQ75508.1"/>
    <property type="status" value="ALT_INIT"/>
    <property type="molecule type" value="Genomic_DNA"/>
</dbReference>
<dbReference type="RefSeq" id="WP_003419750.1">
    <property type="nucleotide sequence ID" value="NZ_CP016972.1"/>
</dbReference>
<dbReference type="SMR" id="A5U908"/>
<dbReference type="KEGG" id="mra:MRA_3719"/>
<dbReference type="eggNOG" id="COG0031">
    <property type="taxonomic scope" value="Bacteria"/>
</dbReference>
<dbReference type="HOGENOM" id="CLU_046285_0_0_11"/>
<dbReference type="Proteomes" id="UP000001988">
    <property type="component" value="Chromosome"/>
</dbReference>
<dbReference type="GO" id="GO:0005737">
    <property type="term" value="C:cytoplasm"/>
    <property type="evidence" value="ECO:0007669"/>
    <property type="project" value="UniProtKB-SubCell"/>
</dbReference>
<dbReference type="GO" id="GO:0016829">
    <property type="term" value="F:lyase activity"/>
    <property type="evidence" value="ECO:0007669"/>
    <property type="project" value="UniProtKB-KW"/>
</dbReference>
<dbReference type="GO" id="GO:0030170">
    <property type="term" value="F:pyridoxal phosphate binding"/>
    <property type="evidence" value="ECO:0007669"/>
    <property type="project" value="UniProtKB-UniRule"/>
</dbReference>
<dbReference type="GO" id="GO:0019450">
    <property type="term" value="P:L-cysteine catabolic process to pyruvate"/>
    <property type="evidence" value="ECO:0007669"/>
    <property type="project" value="UniProtKB-UniRule"/>
</dbReference>
<dbReference type="GO" id="GO:0044272">
    <property type="term" value="P:sulfur compound biosynthetic process"/>
    <property type="evidence" value="ECO:0007669"/>
    <property type="project" value="UniProtKB-ARBA"/>
</dbReference>
<dbReference type="FunFam" id="3.40.50.1100:FF:000015">
    <property type="entry name" value="Cysteine synthase B"/>
    <property type="match status" value="1"/>
</dbReference>
<dbReference type="Gene3D" id="3.40.50.1100">
    <property type="match status" value="2"/>
</dbReference>
<dbReference type="HAMAP" id="MF_00868">
    <property type="entry name" value="Cds1"/>
    <property type="match status" value="1"/>
</dbReference>
<dbReference type="InterPro" id="IPR047586">
    <property type="entry name" value="Cds1"/>
</dbReference>
<dbReference type="InterPro" id="IPR050214">
    <property type="entry name" value="Cys_Synth/Cystath_Beta-Synth"/>
</dbReference>
<dbReference type="InterPro" id="IPR001926">
    <property type="entry name" value="TrpB-like_PALP"/>
</dbReference>
<dbReference type="InterPro" id="IPR036052">
    <property type="entry name" value="TrpB-like_PALP_sf"/>
</dbReference>
<dbReference type="PANTHER" id="PTHR10314">
    <property type="entry name" value="CYSTATHIONINE BETA-SYNTHASE"/>
    <property type="match status" value="1"/>
</dbReference>
<dbReference type="Pfam" id="PF00291">
    <property type="entry name" value="PALP"/>
    <property type="match status" value="1"/>
</dbReference>
<dbReference type="SUPFAM" id="SSF53686">
    <property type="entry name" value="Tryptophan synthase beta subunit-like PLP-dependent enzymes"/>
    <property type="match status" value="1"/>
</dbReference>
<feature type="chain" id="PRO_0000456521" description="L-cysteine desulfhydrase Cds1">
    <location>
        <begin position="1"/>
        <end position="368"/>
    </location>
</feature>
<feature type="binding site" evidence="1">
    <location>
        <begin position="203"/>
        <end position="207"/>
    </location>
    <ligand>
        <name>pyridoxal 5'-phosphate</name>
        <dbReference type="ChEBI" id="CHEBI:597326"/>
    </ligand>
</feature>
<feature type="binding site" evidence="1">
    <location>
        <position position="299"/>
    </location>
    <ligand>
        <name>pyridoxal 5'-phosphate</name>
        <dbReference type="ChEBI" id="CHEBI:597326"/>
    </ligand>
</feature>
<feature type="modified residue" description="N6-(pyridoxal phosphate)lysine" evidence="3">
    <location>
        <position position="67"/>
    </location>
</feature>
<evidence type="ECO:0000250" key="1">
    <source>
        <dbReference type="UniProtKB" id="D2Z027"/>
    </source>
</evidence>
<evidence type="ECO:0000250" key="2">
    <source>
        <dbReference type="UniProtKB" id="O69652"/>
    </source>
</evidence>
<evidence type="ECO:0000255" key="3">
    <source>
        <dbReference type="HAMAP-Rule" id="MF_00868"/>
    </source>
</evidence>
<evidence type="ECO:0000269" key="4">
    <source>
    </source>
</evidence>
<evidence type="ECO:0000305" key="5"/>
<evidence type="ECO:0000305" key="6">
    <source>
    </source>
</evidence>
<evidence type="ECO:0000312" key="7">
    <source>
        <dbReference type="EMBL" id="ABQ75508.1"/>
    </source>
</evidence>
<protein>
    <recommendedName>
        <fullName evidence="3">L-cysteine desulfhydrase Cds1</fullName>
        <ecNumber evidence="2 3">4.4.1.1</ecNumber>
    </recommendedName>
</protein>
<proteinExistence type="evidence at protein level"/>
<gene>
    <name evidence="2 3" type="primary">cds1</name>
    <name evidence="7" type="ordered locus">MRA_3719</name>
</gene>
<name>CDS1_MYCTA</name>
<sequence>MSGGACIAVRSLSRSWTDNAIRLIEADARRSADTHLLRYPLPAAWCTDVDVELYLKDETTHITGSLKHRLARSLFLYALCNGWINENTTVVEASSGSTAVSEAYFAALLGLPFIAVMPAATSASKIALIESQGGRCHFVQNSSQVYAEAERVAKETGGHYLDQFTNAERATDWRGNNNIAESIYVQMREEKHPTPEWIVVGAGTGGTSATIGRYIRYRRHATRLCVVDPENSAFFPAYSEGRYDIVMPTSSRIEGIGRPRVEPSFLPGVVDRMVAVPDAASIAAARHVSAVLGRRVGPSTGTNLWGAFGLLAEMVKQGRSGSVVTLLADSGDRYADTYFSDEWVSAQGLDPAGPAAALVEFERSCRWT</sequence>